<sequence>MSTANNNQPESISMNAFKQPKAFYLIFSIELWERFGYYGLQGIMAVYLVKMLGMSEADSITLFSSFSALVYGFVAIGGWLGDKVLGAKRVIVLGALTLAVGYSMIAYSGHEIFWVYLGMATIAVGNGLFKANPSSLLSTCYSKDDPRLDGAFTMYYMSINIGSFFSMLATPWLAAKYGWSVAFSLSVVGMLITLVNFWFCRKWVKNQGSKPDFLPLQFKKLLMVLVGIIALITLSNWLLHNQIIARWALALVSLGIIFIFTKETLFLQGIARRRMIVAFLLMLEAVIFFVLYSQMPTSLNFFAIHNVEHSIFGIGFEPEQFQALNPFWIMLASPILAAIYNKMGDRLPMPHKFAFGMMLCSAAFLVLPWGASFANEHGIVSVNWLILSYALQSIGELMISGLGLAMVAQLVPQRLMGFIMGSWFLTTAAAALIAGKVAALTAVPSDAITDAHASLAIYSHVFMQIGIVTAIIAVLMMLTAPKLYRMTLAPSDHNDVKIMTQ</sequence>
<dbReference type="EMBL" id="AL590842">
    <property type="protein sequence ID" value="CAL20989.1"/>
    <property type="molecule type" value="Genomic_DNA"/>
</dbReference>
<dbReference type="EMBL" id="AE009952">
    <property type="protein sequence ID" value="AAM85537.1"/>
    <property type="status" value="ALT_INIT"/>
    <property type="molecule type" value="Genomic_DNA"/>
</dbReference>
<dbReference type="EMBL" id="AE017042">
    <property type="protein sequence ID" value="AAS62358.1"/>
    <property type="status" value="ALT_INIT"/>
    <property type="molecule type" value="Genomic_DNA"/>
</dbReference>
<dbReference type="PIR" id="AB0288">
    <property type="entry name" value="AB0288"/>
</dbReference>
<dbReference type="RefSeq" id="WP_002215910.1">
    <property type="nucleotide sequence ID" value="NZ_WUCM01000049.1"/>
</dbReference>
<dbReference type="RefSeq" id="YP_002347328.1">
    <property type="nucleotide sequence ID" value="NC_003143.1"/>
</dbReference>
<dbReference type="SMR" id="Q0WEG0"/>
<dbReference type="IntAct" id="Q0WEG0">
    <property type="interactions" value="2"/>
</dbReference>
<dbReference type="STRING" id="214092.YPO2361"/>
<dbReference type="PaxDb" id="214092-YPO2361"/>
<dbReference type="EnsemblBacteria" id="AAS62358">
    <property type="protein sequence ID" value="AAS62358"/>
    <property type="gene ID" value="YP_2150"/>
</dbReference>
<dbReference type="GeneID" id="57976313"/>
<dbReference type="KEGG" id="ype:YPO2361"/>
<dbReference type="KEGG" id="ypj:CH55_438"/>
<dbReference type="KEGG" id="ypk:y1971"/>
<dbReference type="KEGG" id="ypl:CH46_2744"/>
<dbReference type="KEGG" id="ypm:YP_2150"/>
<dbReference type="KEGG" id="ypv:BZ15_1165"/>
<dbReference type="KEGG" id="ypw:CH59_4193"/>
<dbReference type="PATRIC" id="fig|214092.21.peg.2768"/>
<dbReference type="eggNOG" id="COG3104">
    <property type="taxonomic scope" value="Bacteria"/>
</dbReference>
<dbReference type="HOGENOM" id="CLU_004790_0_0_6"/>
<dbReference type="OMA" id="QMMGVWF"/>
<dbReference type="OrthoDB" id="9772725at2"/>
<dbReference type="Proteomes" id="UP000000815">
    <property type="component" value="Chromosome"/>
</dbReference>
<dbReference type="Proteomes" id="UP000001019">
    <property type="component" value="Chromosome"/>
</dbReference>
<dbReference type="Proteomes" id="UP000002490">
    <property type="component" value="Chromosome"/>
</dbReference>
<dbReference type="GO" id="GO:0005886">
    <property type="term" value="C:plasma membrane"/>
    <property type="evidence" value="ECO:0000318"/>
    <property type="project" value="GO_Central"/>
</dbReference>
<dbReference type="GO" id="GO:0071916">
    <property type="term" value="F:dipeptide transmembrane transporter activity"/>
    <property type="evidence" value="ECO:0000318"/>
    <property type="project" value="GO_Central"/>
</dbReference>
<dbReference type="GO" id="GO:0015333">
    <property type="term" value="F:peptide:proton symporter activity"/>
    <property type="evidence" value="ECO:0000318"/>
    <property type="project" value="GO_Central"/>
</dbReference>
<dbReference type="GO" id="GO:0042937">
    <property type="term" value="F:tripeptide transmembrane transporter activity"/>
    <property type="evidence" value="ECO:0000318"/>
    <property type="project" value="GO_Central"/>
</dbReference>
<dbReference type="GO" id="GO:0035442">
    <property type="term" value="P:dipeptide transmembrane transport"/>
    <property type="evidence" value="ECO:0000318"/>
    <property type="project" value="GO_Central"/>
</dbReference>
<dbReference type="GO" id="GO:0015031">
    <property type="term" value="P:protein transport"/>
    <property type="evidence" value="ECO:0007669"/>
    <property type="project" value="UniProtKB-KW"/>
</dbReference>
<dbReference type="CDD" id="cd17346">
    <property type="entry name" value="MFS_DtpA_like"/>
    <property type="match status" value="1"/>
</dbReference>
<dbReference type="FunFam" id="1.20.1250.20:FF:000017">
    <property type="entry name" value="Dipeptide and tripeptide permease A"/>
    <property type="match status" value="1"/>
</dbReference>
<dbReference type="Gene3D" id="1.20.1250.20">
    <property type="entry name" value="MFS general substrate transporter like domains"/>
    <property type="match status" value="1"/>
</dbReference>
<dbReference type="HAMAP" id="MF_01878">
    <property type="entry name" value="PTR2_DtpA_subfam"/>
    <property type="match status" value="1"/>
</dbReference>
<dbReference type="InterPro" id="IPR023517">
    <property type="entry name" value="AA/pep_transptr_DtpA"/>
</dbReference>
<dbReference type="InterPro" id="IPR005279">
    <property type="entry name" value="Dipep/tripep_permease"/>
</dbReference>
<dbReference type="InterPro" id="IPR036259">
    <property type="entry name" value="MFS_trans_sf"/>
</dbReference>
<dbReference type="InterPro" id="IPR050171">
    <property type="entry name" value="MFS_Transporters"/>
</dbReference>
<dbReference type="InterPro" id="IPR000109">
    <property type="entry name" value="POT_fam"/>
</dbReference>
<dbReference type="InterPro" id="IPR018456">
    <property type="entry name" value="PTR2_symporter_CS"/>
</dbReference>
<dbReference type="NCBIfam" id="NF007137">
    <property type="entry name" value="PRK09584.1"/>
    <property type="match status" value="1"/>
</dbReference>
<dbReference type="NCBIfam" id="TIGR00924">
    <property type="entry name" value="yjdL_sub1_fam"/>
    <property type="match status" value="1"/>
</dbReference>
<dbReference type="PANTHER" id="PTHR23517:SF15">
    <property type="entry name" value="PROTON-DEPENDENT OLIGOPEPTIDE FAMILY TRANSPORT PROTEIN"/>
    <property type="match status" value="1"/>
</dbReference>
<dbReference type="PANTHER" id="PTHR23517">
    <property type="entry name" value="RESISTANCE PROTEIN MDTM, PUTATIVE-RELATED-RELATED"/>
    <property type="match status" value="1"/>
</dbReference>
<dbReference type="Pfam" id="PF00854">
    <property type="entry name" value="PTR2"/>
    <property type="match status" value="1"/>
</dbReference>
<dbReference type="SUPFAM" id="SSF103473">
    <property type="entry name" value="MFS general substrate transporter"/>
    <property type="match status" value="1"/>
</dbReference>
<dbReference type="PROSITE" id="PS01023">
    <property type="entry name" value="PTR2_2"/>
    <property type="match status" value="1"/>
</dbReference>
<comment type="function">
    <text evidence="1">Proton-dependent permease that transports di- and tripeptides.</text>
</comment>
<comment type="subcellular location">
    <subcellularLocation>
        <location evidence="1">Cell inner membrane</location>
        <topology evidence="1">Multi-pass membrane protein</topology>
    </subcellularLocation>
</comment>
<comment type="similarity">
    <text evidence="1">Belongs to the major facilitator superfamily. Proton-dependent oligopeptide transporter (POT/PTR) (TC 2.A.17) family. DtpA subfamily.</text>
</comment>
<comment type="sequence caution" evidence="2">
    <conflict type="erroneous initiation">
        <sequence resource="EMBL-CDS" id="AAM85537"/>
    </conflict>
    <text>Extended N-terminus.</text>
</comment>
<comment type="sequence caution" evidence="2">
    <conflict type="erroneous initiation">
        <sequence resource="EMBL-CDS" id="AAS62358"/>
    </conflict>
    <text>Extended N-terminus.</text>
</comment>
<protein>
    <recommendedName>
        <fullName evidence="1">Dipeptide and tripeptide permease A</fullName>
    </recommendedName>
</protein>
<feature type="chain" id="PRO_0000395182" description="Dipeptide and tripeptide permease A">
    <location>
        <begin position="1"/>
        <end position="501"/>
    </location>
</feature>
<feature type="topological domain" description="Cytoplasmic" evidence="1">
    <location>
        <begin position="1"/>
        <end position="34"/>
    </location>
</feature>
<feature type="transmembrane region" description="Helical" evidence="1">
    <location>
        <begin position="35"/>
        <end position="55"/>
    </location>
</feature>
<feature type="topological domain" description="Periplasmic" evidence="1">
    <location>
        <begin position="56"/>
        <end position="59"/>
    </location>
</feature>
<feature type="transmembrane region" description="Helical" evidence="1">
    <location>
        <begin position="60"/>
        <end position="80"/>
    </location>
</feature>
<feature type="topological domain" description="Cytoplasmic" evidence="1">
    <location>
        <begin position="81"/>
        <end position="89"/>
    </location>
</feature>
<feature type="transmembrane region" description="Helical" evidence="1">
    <location>
        <begin position="90"/>
        <end position="110"/>
    </location>
</feature>
<feature type="transmembrane region" description="Helical" evidence="1">
    <location>
        <begin position="111"/>
        <end position="131"/>
    </location>
</feature>
<feature type="topological domain" description="Periplasmic" evidence="1">
    <location>
        <begin position="132"/>
        <end position="153"/>
    </location>
</feature>
<feature type="transmembrane region" description="Helical" evidence="1">
    <location>
        <begin position="154"/>
        <end position="174"/>
    </location>
</feature>
<feature type="topological domain" description="Cytoplasmic" evidence="1">
    <location>
        <begin position="175"/>
        <end position="178"/>
    </location>
</feature>
<feature type="transmembrane region" description="Helical" evidence="1">
    <location>
        <begin position="179"/>
        <end position="199"/>
    </location>
</feature>
<feature type="topological domain" description="Periplasmic" evidence="1">
    <location>
        <begin position="200"/>
        <end position="220"/>
    </location>
</feature>
<feature type="transmembrane region" description="Helical" evidence="1">
    <location>
        <begin position="221"/>
        <end position="241"/>
    </location>
</feature>
<feature type="topological domain" description="Cytoplasmic" evidence="1">
    <location>
        <begin position="242"/>
        <end position="246"/>
    </location>
</feature>
<feature type="transmembrane region" description="Helical" evidence="1">
    <location>
        <begin position="247"/>
        <end position="267"/>
    </location>
</feature>
<feature type="topological domain" description="Periplasmic" evidence="1">
    <location>
        <begin position="268"/>
        <end position="274"/>
    </location>
</feature>
<feature type="transmembrane region" description="Helical" evidence="1">
    <location>
        <begin position="275"/>
        <end position="295"/>
    </location>
</feature>
<feature type="topological domain" description="Cytoplasmic" evidence="1">
    <location>
        <begin position="296"/>
        <end position="320"/>
    </location>
</feature>
<feature type="transmembrane region" description="Helical" evidence="1">
    <location>
        <begin position="321"/>
        <end position="341"/>
    </location>
</feature>
<feature type="topological domain" description="Periplasmic" evidence="1">
    <location>
        <begin position="342"/>
        <end position="352"/>
    </location>
</feature>
<feature type="transmembrane region" description="Helical" evidence="1">
    <location>
        <begin position="353"/>
        <end position="373"/>
    </location>
</feature>
<feature type="topological domain" description="Cytoplasmic" evidence="1">
    <location>
        <begin position="374"/>
        <end position="383"/>
    </location>
</feature>
<feature type="transmembrane region" description="Helical" evidence="1">
    <location>
        <begin position="384"/>
        <end position="404"/>
    </location>
</feature>
<feature type="topological domain" description="Periplasmic" evidence="1">
    <location>
        <begin position="405"/>
        <end position="414"/>
    </location>
</feature>
<feature type="transmembrane region" description="Helical" evidence="1">
    <location>
        <begin position="415"/>
        <end position="435"/>
    </location>
</feature>
<feature type="topological domain" description="Cytoplasmic" evidence="1">
    <location>
        <begin position="436"/>
        <end position="460"/>
    </location>
</feature>
<feature type="transmembrane region" description="Helical" evidence="1">
    <location>
        <begin position="461"/>
        <end position="481"/>
    </location>
</feature>
<feature type="topological domain" description="Periplasmic" evidence="1">
    <location>
        <begin position="482"/>
        <end position="501"/>
    </location>
</feature>
<proteinExistence type="inferred from homology"/>
<accession>Q0WEG0</accession>
<accession>Q74TK5</accession>
<accession>Q8D0L2</accession>
<gene>
    <name evidence="1" type="primary">dtpA</name>
    <name type="ordered locus">YPO2361</name>
    <name type="ordered locus">y1971</name>
    <name type="ordered locus">YP_2150</name>
</gene>
<organism>
    <name type="scientific">Yersinia pestis</name>
    <dbReference type="NCBI Taxonomy" id="632"/>
    <lineage>
        <taxon>Bacteria</taxon>
        <taxon>Pseudomonadati</taxon>
        <taxon>Pseudomonadota</taxon>
        <taxon>Gammaproteobacteria</taxon>
        <taxon>Enterobacterales</taxon>
        <taxon>Yersiniaceae</taxon>
        <taxon>Yersinia</taxon>
    </lineage>
</organism>
<keyword id="KW-0997">Cell inner membrane</keyword>
<keyword id="KW-1003">Cell membrane</keyword>
<keyword id="KW-0472">Membrane</keyword>
<keyword id="KW-0571">Peptide transport</keyword>
<keyword id="KW-0653">Protein transport</keyword>
<keyword id="KW-1185">Reference proteome</keyword>
<keyword id="KW-0812">Transmembrane</keyword>
<keyword id="KW-1133">Transmembrane helix</keyword>
<keyword id="KW-0813">Transport</keyword>
<reference key="1">
    <citation type="journal article" date="2001" name="Nature">
        <title>Genome sequence of Yersinia pestis, the causative agent of plague.</title>
        <authorList>
            <person name="Parkhill J."/>
            <person name="Wren B.W."/>
            <person name="Thomson N.R."/>
            <person name="Titball R.W."/>
            <person name="Holden M.T.G."/>
            <person name="Prentice M.B."/>
            <person name="Sebaihia M."/>
            <person name="James K.D."/>
            <person name="Churcher C.M."/>
            <person name="Mungall K.L."/>
            <person name="Baker S."/>
            <person name="Basham D."/>
            <person name="Bentley S.D."/>
            <person name="Brooks K."/>
            <person name="Cerdeno-Tarraga A.-M."/>
            <person name="Chillingworth T."/>
            <person name="Cronin A."/>
            <person name="Davies R.M."/>
            <person name="Davis P."/>
            <person name="Dougan G."/>
            <person name="Feltwell T."/>
            <person name="Hamlin N."/>
            <person name="Holroyd S."/>
            <person name="Jagels K."/>
            <person name="Karlyshev A.V."/>
            <person name="Leather S."/>
            <person name="Moule S."/>
            <person name="Oyston P.C.F."/>
            <person name="Quail M.A."/>
            <person name="Rutherford K.M."/>
            <person name="Simmonds M."/>
            <person name="Skelton J."/>
            <person name="Stevens K."/>
            <person name="Whitehead S."/>
            <person name="Barrell B.G."/>
        </authorList>
    </citation>
    <scope>NUCLEOTIDE SEQUENCE [LARGE SCALE GENOMIC DNA]</scope>
    <source>
        <strain>CO-92 / Biovar Orientalis</strain>
    </source>
</reference>
<reference key="2">
    <citation type="journal article" date="2002" name="J. Bacteriol.">
        <title>Genome sequence of Yersinia pestis KIM.</title>
        <authorList>
            <person name="Deng W."/>
            <person name="Burland V."/>
            <person name="Plunkett G. III"/>
            <person name="Boutin A."/>
            <person name="Mayhew G.F."/>
            <person name="Liss P."/>
            <person name="Perna N.T."/>
            <person name="Rose D.J."/>
            <person name="Mau B."/>
            <person name="Zhou S."/>
            <person name="Schwartz D.C."/>
            <person name="Fetherston J.D."/>
            <person name="Lindler L.E."/>
            <person name="Brubaker R.R."/>
            <person name="Plano G.V."/>
            <person name="Straley S.C."/>
            <person name="McDonough K.A."/>
            <person name="Nilles M.L."/>
            <person name="Matson J.S."/>
            <person name="Blattner F.R."/>
            <person name="Perry R.D."/>
        </authorList>
    </citation>
    <scope>NUCLEOTIDE SEQUENCE [LARGE SCALE GENOMIC DNA]</scope>
    <source>
        <strain>KIM10+ / Biovar Mediaevalis</strain>
    </source>
</reference>
<reference key="3">
    <citation type="journal article" date="2004" name="DNA Res.">
        <title>Complete genome sequence of Yersinia pestis strain 91001, an isolate avirulent to humans.</title>
        <authorList>
            <person name="Song Y."/>
            <person name="Tong Z."/>
            <person name="Wang J."/>
            <person name="Wang L."/>
            <person name="Guo Z."/>
            <person name="Han Y."/>
            <person name="Zhang J."/>
            <person name="Pei D."/>
            <person name="Zhou D."/>
            <person name="Qin H."/>
            <person name="Pang X."/>
            <person name="Han Y."/>
            <person name="Zhai J."/>
            <person name="Li M."/>
            <person name="Cui B."/>
            <person name="Qi Z."/>
            <person name="Jin L."/>
            <person name="Dai R."/>
            <person name="Chen F."/>
            <person name="Li S."/>
            <person name="Ye C."/>
            <person name="Du Z."/>
            <person name="Lin W."/>
            <person name="Wang J."/>
            <person name="Yu J."/>
            <person name="Yang H."/>
            <person name="Wang J."/>
            <person name="Huang P."/>
            <person name="Yang R."/>
        </authorList>
    </citation>
    <scope>NUCLEOTIDE SEQUENCE [LARGE SCALE GENOMIC DNA]</scope>
    <source>
        <strain>91001 / Biovar Mediaevalis</strain>
    </source>
</reference>
<name>DTPA_YERPE</name>
<evidence type="ECO:0000255" key="1">
    <source>
        <dbReference type="HAMAP-Rule" id="MF_01878"/>
    </source>
</evidence>
<evidence type="ECO:0000305" key="2"/>